<name>SPKAP_MOUSE</name>
<comment type="function">
    <text evidence="1">Anchoring protein that binds preferentially to the type I regulatory subunit of c-AMP-dependent protein kinase (PKA type I) and targets it to distinct subcellular compartments. May act as a converging factor linking cAMP and sphingosine signaling pathways. Plays a regulatory role in the modulation of SPHK1 (By similarity).</text>
</comment>
<comment type="subunit">
    <text evidence="1">Interacts (via the PKA-RII subunit binding domain) with the RI subunit of PKA. Interacts with SPHK1; the interaction greatly reduces SPHK1 activity (By similarity).</text>
</comment>
<comment type="subcellular location">
    <subcellularLocation>
        <location evidence="1">Cytoplasm</location>
    </subcellularLocation>
    <text evidence="1">Colocalizes with SPHK1 in the cytoplasm.</text>
</comment>
<comment type="alternative products">
    <event type="alternative splicing"/>
    <isoform>
        <id>Q6NSW3-1</id>
        <name>1</name>
        <sequence type="displayed"/>
    </isoform>
    <isoform>
        <id>Q6NSW3-2</id>
        <name>2</name>
        <sequence type="described" ref="VSP_031714"/>
    </isoform>
    <isoform>
        <id>Q6NSW3-3</id>
        <name>3</name>
        <sequence type="described" ref="VSP_031713"/>
    </isoform>
    <isoform>
        <id>Q6NSW3-4</id>
        <name>4</name>
        <sequence type="described" ref="VSP_031713 VSP_031715 VSP_031716"/>
    </isoform>
</comment>
<comment type="domain">
    <text evidence="1">RII-binding site, predicted to form an amphipathic helix, could participate in protein-protein interactions with a complementary surface on the R-subunit dimer.</text>
</comment>
<comment type="similarity">
    <text evidence="5">Belongs to the AKAP110 family.</text>
</comment>
<comment type="sequence caution" evidence="5">
    <conflict type="frameshift">
        <sequence resource="EMBL-CDS" id="BAC25605"/>
    </conflict>
</comment>
<evidence type="ECO:0000250" key="1"/>
<evidence type="ECO:0000256" key="2">
    <source>
        <dbReference type="SAM" id="MobiDB-lite"/>
    </source>
</evidence>
<evidence type="ECO:0000303" key="3">
    <source>
    </source>
</evidence>
<evidence type="ECO:0000303" key="4">
    <source>
    </source>
</evidence>
<evidence type="ECO:0000305" key="5"/>
<evidence type="ECO:0007744" key="6">
    <source>
    </source>
</evidence>
<keyword id="KW-0025">Alternative splicing</keyword>
<keyword id="KW-0963">Cytoplasm</keyword>
<keyword id="KW-0597">Phosphoprotein</keyword>
<keyword id="KW-1185">Reference proteome</keyword>
<protein>
    <recommendedName>
        <fullName>A-kinase anchor protein SPHKAP</fullName>
    </recommendedName>
    <alternativeName>
        <fullName>SPHK1-interactor and AKAP domain-containing protein</fullName>
    </alternativeName>
</protein>
<organism>
    <name type="scientific">Mus musculus</name>
    <name type="common">Mouse</name>
    <dbReference type="NCBI Taxonomy" id="10090"/>
    <lineage>
        <taxon>Eukaryota</taxon>
        <taxon>Metazoa</taxon>
        <taxon>Chordata</taxon>
        <taxon>Craniata</taxon>
        <taxon>Vertebrata</taxon>
        <taxon>Euteleostomi</taxon>
        <taxon>Mammalia</taxon>
        <taxon>Eutheria</taxon>
        <taxon>Euarchontoglires</taxon>
        <taxon>Glires</taxon>
        <taxon>Rodentia</taxon>
        <taxon>Myomorpha</taxon>
        <taxon>Muroidea</taxon>
        <taxon>Muridae</taxon>
        <taxon>Murinae</taxon>
        <taxon>Mus</taxon>
        <taxon>Mus</taxon>
    </lineage>
</organism>
<feature type="chain" id="PRO_0000320667" description="A-kinase anchor protein SPHKAP">
    <location>
        <begin position="1"/>
        <end position="1687"/>
    </location>
</feature>
<feature type="region of interest" description="Disordered" evidence="2">
    <location>
        <begin position="1"/>
        <end position="25"/>
    </location>
</feature>
<feature type="region of interest" description="Disordered" evidence="2">
    <location>
        <begin position="272"/>
        <end position="293"/>
    </location>
</feature>
<feature type="region of interest" description="PKA-RII subunit binding domain" evidence="1">
    <location>
        <begin position="914"/>
        <end position="931"/>
    </location>
</feature>
<feature type="region of interest" description="Disordered" evidence="2">
    <location>
        <begin position="964"/>
        <end position="989"/>
    </location>
</feature>
<feature type="region of interest" description="Disordered" evidence="2">
    <location>
        <begin position="1363"/>
        <end position="1406"/>
    </location>
</feature>
<feature type="region of interest" description="Disordered" evidence="2">
    <location>
        <begin position="1421"/>
        <end position="1520"/>
    </location>
</feature>
<feature type="compositionally biased region" description="Polar residues" evidence="2">
    <location>
        <begin position="1"/>
        <end position="14"/>
    </location>
</feature>
<feature type="compositionally biased region" description="Polar residues" evidence="2">
    <location>
        <begin position="1366"/>
        <end position="1375"/>
    </location>
</feature>
<feature type="compositionally biased region" description="Basic and acidic residues" evidence="2">
    <location>
        <begin position="1382"/>
        <end position="1393"/>
    </location>
</feature>
<feature type="compositionally biased region" description="Polar residues" evidence="2">
    <location>
        <begin position="1461"/>
        <end position="1470"/>
    </location>
</feature>
<feature type="compositionally biased region" description="Basic and acidic residues" evidence="2">
    <location>
        <begin position="1482"/>
        <end position="1494"/>
    </location>
</feature>
<feature type="compositionally biased region" description="Low complexity" evidence="2">
    <location>
        <begin position="1495"/>
        <end position="1508"/>
    </location>
</feature>
<feature type="modified residue" description="Phosphoserine" evidence="6">
    <location>
        <position position="1010"/>
    </location>
</feature>
<feature type="modified residue" description="Phosphoserine" evidence="6">
    <location>
        <position position="1070"/>
    </location>
</feature>
<feature type="modified residue" description="Phosphoserine" evidence="6">
    <location>
        <position position="1092"/>
    </location>
</feature>
<feature type="modified residue" description="Phosphoserine" evidence="6">
    <location>
        <position position="1105"/>
    </location>
</feature>
<feature type="modified residue" description="Phosphoserine" evidence="6">
    <location>
        <position position="1106"/>
    </location>
</feature>
<feature type="modified residue" description="Phosphoserine" evidence="6">
    <location>
        <position position="1109"/>
    </location>
</feature>
<feature type="modified residue" description="Phosphoserine" evidence="6">
    <location>
        <position position="1244"/>
    </location>
</feature>
<feature type="modified residue" description="Phosphoserine" evidence="6">
    <location>
        <position position="1273"/>
    </location>
</feature>
<feature type="splice variant" id="VSP_031713" description="In isoform 3 and isoform 4." evidence="4">
    <original>MDVNSRLSVQ</original>
    <variation>MSTPGFLCKAMWVVEPNSATCLSAALPVKRHCQES</variation>
    <location>
        <begin position="1"/>
        <end position="10"/>
    </location>
</feature>
<feature type="splice variant" id="VSP_031714" description="In isoform 2." evidence="3">
    <location>
        <begin position="1533"/>
        <end position="1561"/>
    </location>
</feature>
<feature type="splice variant" id="VSP_031715" description="In isoform 4." evidence="4">
    <original>N</original>
    <variation>K</variation>
    <location>
        <position position="1561"/>
    </location>
</feature>
<feature type="splice variant" id="VSP_031716" description="In isoform 4." evidence="4">
    <location>
        <begin position="1562"/>
        <end position="1687"/>
    </location>
</feature>
<feature type="sequence conflict" description="In Ref. 1; BAC28620/BAC30075." evidence="5" ref="1">
    <original>P</original>
    <variation>S</variation>
    <location>
        <position position="22"/>
    </location>
</feature>
<feature type="sequence conflict" description="In Ref. 1; BAC28620." evidence="5" ref="1">
    <original>N</original>
    <variation>S</variation>
    <location>
        <position position="104"/>
    </location>
</feature>
<feature type="sequence conflict" description="In Ref. 1; BAC28620/BAC30075." evidence="5" ref="1">
    <original>P</original>
    <variation>L</variation>
    <location>
        <position position="137"/>
    </location>
</feature>
<feature type="sequence conflict" description="In Ref. 2; AAH69832." evidence="5" ref="2">
    <original>K</original>
    <variation>R</variation>
    <location>
        <position position="574"/>
    </location>
</feature>
<feature type="sequence conflict" description="In Ref. 1; BAC28620." evidence="5" ref="1">
    <original>D</original>
    <variation>G</variation>
    <location>
        <position position="585"/>
    </location>
</feature>
<feature type="sequence conflict" description="In Ref. 1; BAC28620." evidence="5" ref="1">
    <original>A</original>
    <variation>G</variation>
    <location>
        <position position="807"/>
    </location>
</feature>
<feature type="sequence conflict" description="In Ref. 1; BAC28620." evidence="5" ref="1">
    <original>R</original>
    <variation>Q</variation>
    <location>
        <position position="838"/>
    </location>
</feature>
<feature type="sequence conflict" description="In Ref. 2; AAH69832." evidence="5" ref="2">
    <original>V</original>
    <variation>A</variation>
    <location>
        <position position="884"/>
    </location>
</feature>
<feature type="sequence conflict" description="In Ref. 2; AAH69832." evidence="5" ref="2">
    <original>P</original>
    <variation>L</variation>
    <location>
        <position position="957"/>
    </location>
</feature>
<feature type="sequence conflict" description="In Ref. 1; BAC25605." evidence="5" ref="1">
    <original>G</original>
    <variation>A</variation>
    <location>
        <position position="974"/>
    </location>
</feature>
<feature type="sequence conflict" description="In Ref. 2; AAH69832." evidence="5" ref="2">
    <original>S</original>
    <variation>F</variation>
    <location>
        <position position="1010"/>
    </location>
</feature>
<feature type="sequence conflict" description="In Ref. 1; BAC30075." evidence="5" ref="1">
    <original>S</original>
    <variation>C</variation>
    <location>
        <position position="1167"/>
    </location>
</feature>
<feature type="sequence conflict" description="In Ref. 2; AAH69832." evidence="5" ref="2">
    <original>D</original>
    <variation>G</variation>
    <location>
        <position position="1203"/>
    </location>
</feature>
<feature type="sequence conflict" description="In Ref. 1; BAC30075." evidence="5" ref="1">
    <original>S</original>
    <variation>C</variation>
    <location>
        <position position="1212"/>
    </location>
</feature>
<sequence length="1687" mass="185095">MDVNSRLSVQSNVESPLMHEGPEPQQITSSAAGNLAGSITACKKVLRSNSLLESTDYWLQNQRTPCQIGFVEDESENCASVCFVNLDVNKDACITENLQQKLVNVSPDLPNLISSMNVQQPKENEIVLLSGLASGNPQADFDVSQCPWLPDICLVQCARGNRPNSTNCIIFEINKFLIGLEVVQERQLHLETNVLKLEDDTNCSLSSIEEDFLTASEHLEEEIEVDDCRSGLENTNVSANVLESKKPKETTQEGWDYHKEKLHCALGEKHIRKHRTPSTKTEGSKENTEENTSLKSLNRLVRPSHLKSEVAGNKQLATNYSYPENIKGELETSQMLFIPRDAYLSMVKKDVLSPCSVLSEQGGSHRDHDVTPNPLPPVQNGEASTGEYATNLAESVMQDAFIRLSQSQPTLPQESAVSFSMRSALLPSGCCTKDMVVPRSWNELPKIVIVQSPDGSDTVPEPNVSSWPDMEFVETSGIFSADSSSRPTQSALEVALACAATVIGTISSPQATERFAMEQESLVSTYAQRGTGVQQTQVPQAFMAPSTTEYSFPSALCGMTQVASAVAVCGLCEKEEATCPVAPTDLLPTSGASEEISSIGSLVMERSTELGKEAIAEALLREATLILARPDAYSSLGELLESVNQRIIETTSKTQTLCTESVQRNELAHTLSNVILKHSVDELHQKTTMAHPTDERHPCGTLDTLMESVNQLLHNVICFTFKKMNHIVTLSEHPSFDQAAGQAWVKAFACPSSQPLSNAHGTGLVIRNLVEDASPKSNKGGARPELVNNPRLQSEFSCSHRMFDSTAKSFPKEIYLKGIMGEDTRNPHHTLNYDSNERRASTDLGKLTTASEGCSGFQETEDSIVPNTQEKYICATPLNNEAQVNLSLLGDDLSVPAQSTLEAKQSEVYGITDFAEELAETVVSMATEIAAICLDNSNGKQPWFCAWKRGNEFLTAPNGSCRSLKRKKENSSAGSTVRKHKPPRLSEIKRKADEHPELKEKLMNRVMDESMNLEDIPDSVSTFANEVAAKIMNLTEFSMVDGVWQGQSCSRTRLLGGDRWNRLKASSCESIPEEDSEARVFVNSLGLMSTLSQPVSRASSVSKQSSCESITDEFSRFMVKQMENEGRGFELLLDYYAGKNASSIMSSAMQQACQKNDHLNVRPSCPSKQSSTESITEEFYRYMLRDIAKESKDGASSRRSSHDWTTGLLSPSTRSPLCYRQSSMPDSRSPCSRLTVNAPVKANSLDGFAQNCPQDSVNVQPVSRASSSGLCKSDSCLYRRSGTDQITNMLIHETWASSIEALMRKNKIIADDSEAANASPGPVSSGSPLQVEKNANRLATSKGHRGPTLLVQESVDYQRKDAVTEGNHSPVSSPGKTAPVKKPSDFDPRRETSACHNAAGLNSPRRSLCSRDVPLIQIETDQKEECIGEPGPFLSQSGSLEETEGHQPEETIPDVARNEDTAPSTCQSSRDSLETSGEVEVEVLKEDIPRDESRNPPSSSEESTGSWSQLANEEDIPDDTSSFLQLSERSMSNGNSSGTSSLGIMDLDIYQESIPSSPMINELVEEKEILKEQSESIKEHASGLPGRAASPQRSLLVINFDLEPECPDAELRATLQWIAASELGIPTIYFKKSQESRIEKFLDVVKLVQQKSWKVGDIFHAVVQYCKLHAEQKERTPSLFDWLLELG</sequence>
<dbReference type="EMBL" id="AK034183">
    <property type="protein sequence ID" value="BAC28620.1"/>
    <property type="molecule type" value="mRNA"/>
</dbReference>
<dbReference type="EMBL" id="AK038638">
    <property type="protein sequence ID" value="BAC30075.1"/>
    <property type="molecule type" value="mRNA"/>
</dbReference>
<dbReference type="EMBL" id="AK019735">
    <property type="protein sequence ID" value="BAC25605.1"/>
    <property type="status" value="ALT_FRAME"/>
    <property type="molecule type" value="mRNA"/>
</dbReference>
<dbReference type="EMBL" id="BC042654">
    <property type="protein sequence ID" value="AAH42654.1"/>
    <property type="molecule type" value="mRNA"/>
</dbReference>
<dbReference type="EMBL" id="BC060165">
    <property type="protein sequence ID" value="AAH60165.1"/>
    <property type="molecule type" value="mRNA"/>
</dbReference>
<dbReference type="EMBL" id="BC060217">
    <property type="protein sequence ID" value="AAH60217.1"/>
    <property type="molecule type" value="mRNA"/>
</dbReference>
<dbReference type="EMBL" id="BC069832">
    <property type="protein sequence ID" value="AAH69832.1"/>
    <property type="molecule type" value="mRNA"/>
</dbReference>
<dbReference type="EMBL" id="AK122538">
    <property type="protein sequence ID" value="BAC65820.1"/>
    <property type="molecule type" value="mRNA"/>
</dbReference>
<dbReference type="CCDS" id="CCDS48298.1">
    <molecule id="Q6NSW3-2"/>
</dbReference>
<dbReference type="SMR" id="Q6NSW3"/>
<dbReference type="BioGRID" id="218811">
    <property type="interactions" value="14"/>
</dbReference>
<dbReference type="FunCoup" id="Q6NSW3">
    <property type="interactions" value="593"/>
</dbReference>
<dbReference type="IntAct" id="Q6NSW3">
    <property type="interactions" value="2"/>
</dbReference>
<dbReference type="STRING" id="10090.ENSMUSP00000124872"/>
<dbReference type="GlyGen" id="Q6NSW3">
    <property type="glycosylation" value="8 sites, 3 N-linked glycans (3 sites), 1 O-linked glycan (5 sites)"/>
</dbReference>
<dbReference type="iPTMnet" id="Q6NSW3"/>
<dbReference type="PhosphoSitePlus" id="Q6NSW3"/>
<dbReference type="SwissPalm" id="Q6NSW3"/>
<dbReference type="PaxDb" id="10090-ENSMUSP00000124872"/>
<dbReference type="PeptideAtlas" id="Q6NSW3"/>
<dbReference type="ProteomicsDB" id="257321">
    <molecule id="Q6NSW3-1"/>
</dbReference>
<dbReference type="ProteomicsDB" id="257322">
    <molecule id="Q6NSW3-2"/>
</dbReference>
<dbReference type="ProteomicsDB" id="257323">
    <molecule id="Q6NSW3-3"/>
</dbReference>
<dbReference type="ProteomicsDB" id="257324">
    <molecule id="Q6NSW3-4"/>
</dbReference>
<dbReference type="ABCD" id="Q6NSW3">
    <property type="antibodies" value="3 sequenced antibodies"/>
</dbReference>
<dbReference type="UCSC" id="uc007bsp.2">
    <molecule id="Q6NSW3-1"/>
    <property type="organism name" value="mouse"/>
</dbReference>
<dbReference type="UCSC" id="uc007bsr.2">
    <molecule id="Q6NSW3-4"/>
    <property type="organism name" value="mouse"/>
</dbReference>
<dbReference type="AGR" id="MGI:1924879"/>
<dbReference type="MGI" id="MGI:1924879">
    <property type="gene designation" value="Sphkap"/>
</dbReference>
<dbReference type="eggNOG" id="ENOG502QQ6Q">
    <property type="taxonomic scope" value="Eukaryota"/>
</dbReference>
<dbReference type="InParanoid" id="Q6NSW3"/>
<dbReference type="PhylomeDB" id="Q6NSW3"/>
<dbReference type="BioGRID-ORCS" id="77629">
    <property type="hits" value="1 hit in 79 CRISPR screens"/>
</dbReference>
<dbReference type="CD-CODE" id="CE726F99">
    <property type="entry name" value="Postsynaptic density"/>
</dbReference>
<dbReference type="ChiTaRS" id="Sphkap">
    <property type="organism name" value="mouse"/>
</dbReference>
<dbReference type="PRO" id="PR:Q6NSW3"/>
<dbReference type="Proteomes" id="UP000000589">
    <property type="component" value="Unplaced"/>
</dbReference>
<dbReference type="RNAct" id="Q6NSW3">
    <property type="molecule type" value="protein"/>
</dbReference>
<dbReference type="GO" id="GO:0005739">
    <property type="term" value="C:mitochondrion"/>
    <property type="evidence" value="ECO:0000314"/>
    <property type="project" value="MGI"/>
</dbReference>
<dbReference type="GO" id="GO:0030018">
    <property type="term" value="C:Z disc"/>
    <property type="evidence" value="ECO:0000314"/>
    <property type="project" value="MGI"/>
</dbReference>
<dbReference type="GO" id="GO:0051018">
    <property type="term" value="F:protein kinase A binding"/>
    <property type="evidence" value="ECO:0000353"/>
    <property type="project" value="MGI"/>
</dbReference>
<dbReference type="InterPro" id="IPR018292">
    <property type="entry name" value="AKAP_110_C"/>
</dbReference>
<dbReference type="InterPro" id="IPR008382">
    <property type="entry name" value="SPHK1-interactor_AKAP_110"/>
</dbReference>
<dbReference type="PANTHER" id="PTHR10226">
    <property type="entry name" value="A KINASE ANCHOR PROTEIN"/>
    <property type="match status" value="1"/>
</dbReference>
<dbReference type="PANTHER" id="PTHR10226:SF7">
    <property type="entry name" value="A-KINASE ANCHOR PROTEIN SPHKAP"/>
    <property type="match status" value="1"/>
</dbReference>
<dbReference type="Pfam" id="PF05716">
    <property type="entry name" value="AKAP_110"/>
    <property type="match status" value="1"/>
</dbReference>
<reference key="1">
    <citation type="journal article" date="2005" name="Science">
        <title>The transcriptional landscape of the mammalian genome.</title>
        <authorList>
            <person name="Carninci P."/>
            <person name="Kasukawa T."/>
            <person name="Katayama S."/>
            <person name="Gough J."/>
            <person name="Frith M.C."/>
            <person name="Maeda N."/>
            <person name="Oyama R."/>
            <person name="Ravasi T."/>
            <person name="Lenhard B."/>
            <person name="Wells C."/>
            <person name="Kodzius R."/>
            <person name="Shimokawa K."/>
            <person name="Bajic V.B."/>
            <person name="Brenner S.E."/>
            <person name="Batalov S."/>
            <person name="Forrest A.R."/>
            <person name="Zavolan M."/>
            <person name="Davis M.J."/>
            <person name="Wilming L.G."/>
            <person name="Aidinis V."/>
            <person name="Allen J.E."/>
            <person name="Ambesi-Impiombato A."/>
            <person name="Apweiler R."/>
            <person name="Aturaliya R.N."/>
            <person name="Bailey T.L."/>
            <person name="Bansal M."/>
            <person name="Baxter L."/>
            <person name="Beisel K.W."/>
            <person name="Bersano T."/>
            <person name="Bono H."/>
            <person name="Chalk A.M."/>
            <person name="Chiu K.P."/>
            <person name="Choudhary V."/>
            <person name="Christoffels A."/>
            <person name="Clutterbuck D.R."/>
            <person name="Crowe M.L."/>
            <person name="Dalla E."/>
            <person name="Dalrymple B.P."/>
            <person name="de Bono B."/>
            <person name="Della Gatta G."/>
            <person name="di Bernardo D."/>
            <person name="Down T."/>
            <person name="Engstrom P."/>
            <person name="Fagiolini M."/>
            <person name="Faulkner G."/>
            <person name="Fletcher C.F."/>
            <person name="Fukushima T."/>
            <person name="Furuno M."/>
            <person name="Futaki S."/>
            <person name="Gariboldi M."/>
            <person name="Georgii-Hemming P."/>
            <person name="Gingeras T.R."/>
            <person name="Gojobori T."/>
            <person name="Green R.E."/>
            <person name="Gustincich S."/>
            <person name="Harbers M."/>
            <person name="Hayashi Y."/>
            <person name="Hensch T.K."/>
            <person name="Hirokawa N."/>
            <person name="Hill D."/>
            <person name="Huminiecki L."/>
            <person name="Iacono M."/>
            <person name="Ikeo K."/>
            <person name="Iwama A."/>
            <person name="Ishikawa T."/>
            <person name="Jakt M."/>
            <person name="Kanapin A."/>
            <person name="Katoh M."/>
            <person name="Kawasawa Y."/>
            <person name="Kelso J."/>
            <person name="Kitamura H."/>
            <person name="Kitano H."/>
            <person name="Kollias G."/>
            <person name="Krishnan S.P."/>
            <person name="Kruger A."/>
            <person name="Kummerfeld S.K."/>
            <person name="Kurochkin I.V."/>
            <person name="Lareau L.F."/>
            <person name="Lazarevic D."/>
            <person name="Lipovich L."/>
            <person name="Liu J."/>
            <person name="Liuni S."/>
            <person name="McWilliam S."/>
            <person name="Madan Babu M."/>
            <person name="Madera M."/>
            <person name="Marchionni L."/>
            <person name="Matsuda H."/>
            <person name="Matsuzawa S."/>
            <person name="Miki H."/>
            <person name="Mignone F."/>
            <person name="Miyake S."/>
            <person name="Morris K."/>
            <person name="Mottagui-Tabar S."/>
            <person name="Mulder N."/>
            <person name="Nakano N."/>
            <person name="Nakauchi H."/>
            <person name="Ng P."/>
            <person name="Nilsson R."/>
            <person name="Nishiguchi S."/>
            <person name="Nishikawa S."/>
            <person name="Nori F."/>
            <person name="Ohara O."/>
            <person name="Okazaki Y."/>
            <person name="Orlando V."/>
            <person name="Pang K.C."/>
            <person name="Pavan W.J."/>
            <person name="Pavesi G."/>
            <person name="Pesole G."/>
            <person name="Petrovsky N."/>
            <person name="Piazza S."/>
            <person name="Reed J."/>
            <person name="Reid J.F."/>
            <person name="Ring B.Z."/>
            <person name="Ringwald M."/>
            <person name="Rost B."/>
            <person name="Ruan Y."/>
            <person name="Salzberg S.L."/>
            <person name="Sandelin A."/>
            <person name="Schneider C."/>
            <person name="Schoenbach C."/>
            <person name="Sekiguchi K."/>
            <person name="Semple C.A."/>
            <person name="Seno S."/>
            <person name="Sessa L."/>
            <person name="Sheng Y."/>
            <person name="Shibata Y."/>
            <person name="Shimada H."/>
            <person name="Shimada K."/>
            <person name="Silva D."/>
            <person name="Sinclair B."/>
            <person name="Sperling S."/>
            <person name="Stupka E."/>
            <person name="Sugiura K."/>
            <person name="Sultana R."/>
            <person name="Takenaka Y."/>
            <person name="Taki K."/>
            <person name="Tammoja K."/>
            <person name="Tan S.L."/>
            <person name="Tang S."/>
            <person name="Taylor M.S."/>
            <person name="Tegner J."/>
            <person name="Teichmann S.A."/>
            <person name="Ueda H.R."/>
            <person name="van Nimwegen E."/>
            <person name="Verardo R."/>
            <person name="Wei C.L."/>
            <person name="Yagi K."/>
            <person name="Yamanishi H."/>
            <person name="Zabarovsky E."/>
            <person name="Zhu S."/>
            <person name="Zimmer A."/>
            <person name="Hide W."/>
            <person name="Bult C."/>
            <person name="Grimmond S.M."/>
            <person name="Teasdale R.D."/>
            <person name="Liu E.T."/>
            <person name="Brusic V."/>
            <person name="Quackenbush J."/>
            <person name="Wahlestedt C."/>
            <person name="Mattick J.S."/>
            <person name="Hume D.A."/>
            <person name="Kai C."/>
            <person name="Sasaki D."/>
            <person name="Tomaru Y."/>
            <person name="Fukuda S."/>
            <person name="Kanamori-Katayama M."/>
            <person name="Suzuki M."/>
            <person name="Aoki J."/>
            <person name="Arakawa T."/>
            <person name="Iida J."/>
            <person name="Imamura K."/>
            <person name="Itoh M."/>
            <person name="Kato T."/>
            <person name="Kawaji H."/>
            <person name="Kawagashira N."/>
            <person name="Kawashima T."/>
            <person name="Kojima M."/>
            <person name="Kondo S."/>
            <person name="Konno H."/>
            <person name="Nakano K."/>
            <person name="Ninomiya N."/>
            <person name="Nishio T."/>
            <person name="Okada M."/>
            <person name="Plessy C."/>
            <person name="Shibata K."/>
            <person name="Shiraki T."/>
            <person name="Suzuki S."/>
            <person name="Tagami M."/>
            <person name="Waki K."/>
            <person name="Watahiki A."/>
            <person name="Okamura-Oho Y."/>
            <person name="Suzuki H."/>
            <person name="Kawai J."/>
            <person name="Hayashizaki Y."/>
        </authorList>
    </citation>
    <scope>NUCLEOTIDE SEQUENCE [LARGE SCALE MRNA] (ISOFORM 4)</scope>
    <scope>NUCLEOTIDE SEQUENCE [LARGE SCALE MRNA] OF 1-868 (ISOFORM 3)</scope>
    <scope>NUCLEOTIDE SEQUENCE [LARGE SCALE MRNA] OF 899-1687 (ISOFORM 1)</scope>
    <source>
        <strain>C57BL/6J</strain>
        <tissue>Diencephalon</tissue>
        <tissue>Hypothalamus</tissue>
        <tissue>Testis</tissue>
    </source>
</reference>
<reference key="2">
    <citation type="journal article" date="2004" name="Genome Res.">
        <title>The status, quality, and expansion of the NIH full-length cDNA project: the Mammalian Gene Collection (MGC).</title>
        <authorList>
            <consortium name="The MGC Project Team"/>
        </authorList>
    </citation>
    <scope>NUCLEOTIDE SEQUENCE [LARGE SCALE MRNA] (ISOFORM 2)</scope>
    <source>
        <strain>C57BL/6J</strain>
        <tissue>Brain</tissue>
        <tissue>Embryo</tissue>
        <tissue>Eye</tissue>
    </source>
</reference>
<reference key="3">
    <citation type="journal article" date="2003" name="DNA Res.">
        <title>Prediction of the coding sequences of mouse homologues of KIAA gene: II. The complete nucleotide sequences of 400 mouse KIAA-homologous cDNAs identified by screening of terminal sequences of cDNA clones randomly sampled from size-fractionated libraries.</title>
        <authorList>
            <person name="Okazaki N."/>
            <person name="Kikuno R."/>
            <person name="Ohara R."/>
            <person name="Inamoto S."/>
            <person name="Aizawa H."/>
            <person name="Yuasa S."/>
            <person name="Nakajima D."/>
            <person name="Nagase T."/>
            <person name="Ohara O."/>
            <person name="Koga H."/>
        </authorList>
    </citation>
    <scope>NUCLEOTIDE SEQUENCE [LARGE SCALE MRNA] OF 288-1687 (ISOFORM 1)</scope>
</reference>
<reference key="4">
    <citation type="journal article" date="2006" name="Mol. Cell. Proteomics">
        <title>Comprehensive identification of phosphorylation sites in postsynaptic density preparations.</title>
        <authorList>
            <person name="Trinidad J.C."/>
            <person name="Specht C.G."/>
            <person name="Thalhammer A."/>
            <person name="Schoepfer R."/>
            <person name="Burlingame A.L."/>
        </authorList>
    </citation>
    <scope>IDENTIFICATION BY MASS SPECTROMETRY [LARGE SCALE ANALYSIS]</scope>
    <source>
        <tissue>Brain</tissue>
    </source>
</reference>
<reference key="5">
    <citation type="journal article" date="2010" name="Cell">
        <title>A tissue-specific atlas of mouse protein phosphorylation and expression.</title>
        <authorList>
            <person name="Huttlin E.L."/>
            <person name="Jedrychowski M.P."/>
            <person name="Elias J.E."/>
            <person name="Goswami T."/>
            <person name="Rad R."/>
            <person name="Beausoleil S.A."/>
            <person name="Villen J."/>
            <person name="Haas W."/>
            <person name="Sowa M.E."/>
            <person name="Gygi S.P."/>
        </authorList>
    </citation>
    <scope>PHOSPHORYLATION [LARGE SCALE ANALYSIS] AT SER-1010; SER-1070; SER-1092; SER-1105; SER-1106; SER-1109; SER-1244 AND SER-1273</scope>
    <scope>IDENTIFICATION BY MASS SPECTROMETRY [LARGE SCALE ANALYSIS]</scope>
    <source>
        <tissue>Brain</tissue>
        <tissue>Lung</tissue>
        <tissue>Testis</tissue>
    </source>
</reference>
<accession>Q6NSW3</accession>
<accession>Q6PAM6</accession>
<accession>Q6PAP7</accession>
<accession>Q80TA7</accession>
<accession>Q80XT3</accession>
<accession>Q8BYQ9</accession>
<accession>Q8BZL6</accession>
<accession>Q8C1G7</accession>
<gene>
    <name type="primary">Sphkap</name>
    <name type="synonym">Kiaa1678</name>
</gene>
<proteinExistence type="evidence at protein level"/>